<name>PYRF_BUCAT</name>
<sequence>MLNPNIFHMPKIIIALDFCNKKSAMKLVNLLNPSIFYLKIGKEMFTILGCKFVKELHQLGFNIFLDLKFHDIPNTVFNATKAAADLGIWMLSVHASGGKEMLISAKKALKSFKKAPLLIAVTALTSFKEEALKEIGINISLTEYILKLSKLSNDCGLDGIVCPGKEAKKIKFLFGNKYKIITPGIRIAKDLLYDQNNIITPKEAKEYKIDYIVIGRSITMSKNPIKKLDLIIKSMQ</sequence>
<protein>
    <recommendedName>
        <fullName evidence="1">Orotidine 5'-phosphate decarboxylase</fullName>
        <ecNumber evidence="1">4.1.1.23</ecNumber>
    </recommendedName>
    <alternativeName>
        <fullName evidence="1">OMP decarboxylase</fullName>
        <shortName evidence="1">OMPDCase</shortName>
        <shortName evidence="1">OMPdecase</shortName>
    </alternativeName>
</protein>
<gene>
    <name evidence="1" type="primary">pyrF</name>
    <name type="ordered locus">BUAPTUC7_267</name>
</gene>
<reference key="1">
    <citation type="journal article" date="2009" name="Science">
        <title>The dynamics and time scale of ongoing genomic erosion in symbiotic bacteria.</title>
        <authorList>
            <person name="Moran N.A."/>
            <person name="McLaughlin H.J."/>
            <person name="Sorek R."/>
        </authorList>
    </citation>
    <scope>NUCLEOTIDE SEQUENCE [LARGE SCALE GENOMIC DNA]</scope>
    <source>
        <strain>Tuc7</strain>
    </source>
</reference>
<dbReference type="EC" id="4.1.1.23" evidence="1"/>
<dbReference type="EMBL" id="CP001158">
    <property type="protein sequence ID" value="ACL30082.1"/>
    <property type="molecule type" value="Genomic_DNA"/>
</dbReference>
<dbReference type="RefSeq" id="WP_010896037.1">
    <property type="nucleotide sequence ID" value="NC_011834.1"/>
</dbReference>
<dbReference type="SMR" id="B8D7G7"/>
<dbReference type="KEGG" id="bau:BUAPTUC7_267"/>
<dbReference type="HOGENOM" id="CLU_067069_0_0_6"/>
<dbReference type="UniPathway" id="UPA00070">
    <property type="reaction ID" value="UER00120"/>
</dbReference>
<dbReference type="GO" id="GO:0005829">
    <property type="term" value="C:cytosol"/>
    <property type="evidence" value="ECO:0007669"/>
    <property type="project" value="TreeGrafter"/>
</dbReference>
<dbReference type="GO" id="GO:0004590">
    <property type="term" value="F:orotidine-5'-phosphate decarboxylase activity"/>
    <property type="evidence" value="ECO:0007669"/>
    <property type="project" value="UniProtKB-UniRule"/>
</dbReference>
<dbReference type="GO" id="GO:0006207">
    <property type="term" value="P:'de novo' pyrimidine nucleobase biosynthetic process"/>
    <property type="evidence" value="ECO:0007669"/>
    <property type="project" value="InterPro"/>
</dbReference>
<dbReference type="GO" id="GO:0044205">
    <property type="term" value="P:'de novo' UMP biosynthetic process"/>
    <property type="evidence" value="ECO:0007669"/>
    <property type="project" value="UniProtKB-UniRule"/>
</dbReference>
<dbReference type="CDD" id="cd04725">
    <property type="entry name" value="OMP_decarboxylase_like"/>
    <property type="match status" value="1"/>
</dbReference>
<dbReference type="FunFam" id="3.20.20.70:FF:000015">
    <property type="entry name" value="Orotidine 5'-phosphate decarboxylase"/>
    <property type="match status" value="1"/>
</dbReference>
<dbReference type="Gene3D" id="3.20.20.70">
    <property type="entry name" value="Aldolase class I"/>
    <property type="match status" value="1"/>
</dbReference>
<dbReference type="HAMAP" id="MF_01200_B">
    <property type="entry name" value="OMPdecase_type1_B"/>
    <property type="match status" value="1"/>
</dbReference>
<dbReference type="InterPro" id="IPR013785">
    <property type="entry name" value="Aldolase_TIM"/>
</dbReference>
<dbReference type="InterPro" id="IPR014732">
    <property type="entry name" value="OMPdecase"/>
</dbReference>
<dbReference type="InterPro" id="IPR018089">
    <property type="entry name" value="OMPdecase_AS"/>
</dbReference>
<dbReference type="InterPro" id="IPR047596">
    <property type="entry name" value="OMPdecase_bac"/>
</dbReference>
<dbReference type="InterPro" id="IPR001754">
    <property type="entry name" value="OMPdeCOase_dom"/>
</dbReference>
<dbReference type="InterPro" id="IPR011060">
    <property type="entry name" value="RibuloseP-bd_barrel"/>
</dbReference>
<dbReference type="NCBIfam" id="NF001273">
    <property type="entry name" value="PRK00230.1"/>
    <property type="match status" value="1"/>
</dbReference>
<dbReference type="NCBIfam" id="TIGR01740">
    <property type="entry name" value="pyrF"/>
    <property type="match status" value="1"/>
</dbReference>
<dbReference type="PANTHER" id="PTHR32119">
    <property type="entry name" value="OROTIDINE 5'-PHOSPHATE DECARBOXYLASE"/>
    <property type="match status" value="1"/>
</dbReference>
<dbReference type="PANTHER" id="PTHR32119:SF2">
    <property type="entry name" value="OROTIDINE 5'-PHOSPHATE DECARBOXYLASE"/>
    <property type="match status" value="1"/>
</dbReference>
<dbReference type="Pfam" id="PF00215">
    <property type="entry name" value="OMPdecase"/>
    <property type="match status" value="1"/>
</dbReference>
<dbReference type="SMART" id="SM00934">
    <property type="entry name" value="OMPdecase"/>
    <property type="match status" value="1"/>
</dbReference>
<dbReference type="SUPFAM" id="SSF51366">
    <property type="entry name" value="Ribulose-phoshate binding barrel"/>
    <property type="match status" value="1"/>
</dbReference>
<dbReference type="PROSITE" id="PS00156">
    <property type="entry name" value="OMPDECASE"/>
    <property type="match status" value="1"/>
</dbReference>
<accession>B8D7G7</accession>
<feature type="chain" id="PRO_1000164563" description="Orotidine 5'-phosphate decarboxylase">
    <location>
        <begin position="1"/>
        <end position="236"/>
    </location>
</feature>
<feature type="active site" description="Proton donor" evidence="1">
    <location>
        <position position="68"/>
    </location>
</feature>
<feature type="binding site" evidence="1">
    <location>
        <position position="17"/>
    </location>
    <ligand>
        <name>substrate</name>
    </ligand>
</feature>
<feature type="binding site" evidence="1">
    <location>
        <position position="39"/>
    </location>
    <ligand>
        <name>substrate</name>
    </ligand>
</feature>
<feature type="binding site" evidence="1">
    <location>
        <begin position="66"/>
        <end position="75"/>
    </location>
    <ligand>
        <name>substrate</name>
    </ligand>
</feature>
<feature type="binding site" evidence="1">
    <location>
        <position position="125"/>
    </location>
    <ligand>
        <name>substrate</name>
    </ligand>
</feature>
<feature type="binding site" evidence="1">
    <location>
        <position position="186"/>
    </location>
    <ligand>
        <name>substrate</name>
    </ligand>
</feature>
<feature type="binding site" evidence="1">
    <location>
        <position position="195"/>
    </location>
    <ligand>
        <name>substrate</name>
    </ligand>
</feature>
<feature type="binding site" evidence="1">
    <location>
        <position position="215"/>
    </location>
    <ligand>
        <name>substrate</name>
    </ligand>
</feature>
<feature type="binding site" evidence="1">
    <location>
        <position position="216"/>
    </location>
    <ligand>
        <name>substrate</name>
    </ligand>
</feature>
<evidence type="ECO:0000255" key="1">
    <source>
        <dbReference type="HAMAP-Rule" id="MF_01200"/>
    </source>
</evidence>
<organism>
    <name type="scientific">Buchnera aphidicola subsp. Acyrthosiphon pisum (strain Tuc7)</name>
    <dbReference type="NCBI Taxonomy" id="561501"/>
    <lineage>
        <taxon>Bacteria</taxon>
        <taxon>Pseudomonadati</taxon>
        <taxon>Pseudomonadota</taxon>
        <taxon>Gammaproteobacteria</taxon>
        <taxon>Enterobacterales</taxon>
        <taxon>Erwiniaceae</taxon>
        <taxon>Buchnera</taxon>
    </lineage>
</organism>
<keyword id="KW-0210">Decarboxylase</keyword>
<keyword id="KW-0456">Lyase</keyword>
<keyword id="KW-0665">Pyrimidine biosynthesis</keyword>
<comment type="function">
    <text evidence="1">Catalyzes the decarboxylation of orotidine 5'-monophosphate (OMP) to uridine 5'-monophosphate (UMP).</text>
</comment>
<comment type="catalytic activity">
    <reaction evidence="1">
        <text>orotidine 5'-phosphate + H(+) = UMP + CO2</text>
        <dbReference type="Rhea" id="RHEA:11596"/>
        <dbReference type="ChEBI" id="CHEBI:15378"/>
        <dbReference type="ChEBI" id="CHEBI:16526"/>
        <dbReference type="ChEBI" id="CHEBI:57538"/>
        <dbReference type="ChEBI" id="CHEBI:57865"/>
        <dbReference type="EC" id="4.1.1.23"/>
    </reaction>
</comment>
<comment type="pathway">
    <text evidence="1">Pyrimidine metabolism; UMP biosynthesis via de novo pathway; UMP from orotate: step 2/2.</text>
</comment>
<comment type="subunit">
    <text evidence="1">Homodimer.</text>
</comment>
<comment type="similarity">
    <text evidence="1">Belongs to the OMP decarboxylase family. Type 1 subfamily.</text>
</comment>
<proteinExistence type="inferred from homology"/>